<proteinExistence type="inferred from homology"/>
<feature type="chain" id="PRO_0000367251" description="ADP-ribosylation factor-like protein DDB_G0292332">
    <location>
        <begin position="1"/>
        <end position="186"/>
    </location>
</feature>
<feature type="binding site" evidence="1">
    <location>
        <begin position="24"/>
        <end position="31"/>
    </location>
    <ligand>
        <name>GTP</name>
        <dbReference type="ChEBI" id="CHEBI:37565"/>
    </ligand>
</feature>
<feature type="binding site" evidence="1">
    <location>
        <begin position="78"/>
        <end position="82"/>
    </location>
    <ligand>
        <name>GTP</name>
        <dbReference type="ChEBI" id="CHEBI:37565"/>
    </ligand>
</feature>
<feature type="binding site" evidence="1">
    <location>
        <begin position="138"/>
        <end position="141"/>
    </location>
    <ligand>
        <name>GTP</name>
        <dbReference type="ChEBI" id="CHEBI:37565"/>
    </ligand>
</feature>
<protein>
    <recommendedName>
        <fullName>ADP-ribosylation factor-like protein DDB_G0292332</fullName>
    </recommendedName>
</protein>
<comment type="function">
    <text evidence="1">Binds and exchanges GTP and GDP.</text>
</comment>
<comment type="similarity">
    <text evidence="2">Belongs to the small GTPase superfamily. Arf family.</text>
</comment>
<name>ARLX_DICDI</name>
<gene>
    <name type="ORF">DDB_G0292332</name>
</gene>
<evidence type="ECO:0000250" key="1"/>
<evidence type="ECO:0000305" key="2"/>
<accession>Q1ZXA5</accession>
<dbReference type="EMBL" id="AAFI02000189">
    <property type="protein sequence ID" value="EAS66811.1"/>
    <property type="molecule type" value="Genomic_DNA"/>
</dbReference>
<dbReference type="RefSeq" id="XP_001134494.1">
    <property type="nucleotide sequence ID" value="XM_001134494.1"/>
</dbReference>
<dbReference type="SMR" id="Q1ZXA5"/>
<dbReference type="STRING" id="44689.Q1ZXA5"/>
<dbReference type="PaxDb" id="44689-DDB0233231"/>
<dbReference type="EnsemblProtists" id="EAS66811">
    <property type="protein sequence ID" value="EAS66811"/>
    <property type="gene ID" value="DDB_G0292332"/>
</dbReference>
<dbReference type="GeneID" id="8628628"/>
<dbReference type="KEGG" id="ddi:DDB_G0292332"/>
<dbReference type="dictyBase" id="DDB_G0292332"/>
<dbReference type="VEuPathDB" id="AmoebaDB:DDB_G0292332"/>
<dbReference type="eggNOG" id="KOG0071">
    <property type="taxonomic scope" value="Eukaryota"/>
</dbReference>
<dbReference type="HOGENOM" id="CLU_1457011_0_0_1"/>
<dbReference type="InParanoid" id="Q1ZXA5"/>
<dbReference type="PhylomeDB" id="Q1ZXA5"/>
<dbReference type="Reactome" id="R-DDI-1660514">
    <property type="pathway name" value="Synthesis of PIPs at the Golgi membrane"/>
</dbReference>
<dbReference type="Reactome" id="R-DDI-199992">
    <property type="pathway name" value="trans-Golgi Network Vesicle Budding"/>
</dbReference>
<dbReference type="Reactome" id="R-DDI-5620916">
    <property type="pathway name" value="VxPx cargo-targeting to cilium"/>
</dbReference>
<dbReference type="Reactome" id="R-DDI-6807878">
    <property type="pathway name" value="COPI-mediated anterograde transport"/>
</dbReference>
<dbReference type="Reactome" id="R-DDI-6811434">
    <property type="pathway name" value="COPI-dependent Golgi-to-ER retrograde traffic"/>
</dbReference>
<dbReference type="Reactome" id="R-DDI-6811438">
    <property type="pathway name" value="Intra-Golgi traffic"/>
</dbReference>
<dbReference type="PRO" id="PR:Q1ZXA5"/>
<dbReference type="Proteomes" id="UP000002195">
    <property type="component" value="Chromosome 6"/>
</dbReference>
<dbReference type="GO" id="GO:0005737">
    <property type="term" value="C:cytoplasm"/>
    <property type="evidence" value="ECO:0000318"/>
    <property type="project" value="GO_Central"/>
</dbReference>
<dbReference type="GO" id="GO:0005794">
    <property type="term" value="C:Golgi apparatus"/>
    <property type="evidence" value="ECO:0000318"/>
    <property type="project" value="GO_Central"/>
</dbReference>
<dbReference type="GO" id="GO:0005525">
    <property type="term" value="F:GTP binding"/>
    <property type="evidence" value="ECO:0000318"/>
    <property type="project" value="GO_Central"/>
</dbReference>
<dbReference type="GO" id="GO:0003924">
    <property type="term" value="F:GTPase activity"/>
    <property type="evidence" value="ECO:0007669"/>
    <property type="project" value="InterPro"/>
</dbReference>
<dbReference type="GO" id="GO:0006886">
    <property type="term" value="P:intracellular protein transport"/>
    <property type="evidence" value="ECO:0000318"/>
    <property type="project" value="GO_Central"/>
</dbReference>
<dbReference type="GO" id="GO:0016192">
    <property type="term" value="P:vesicle-mediated transport"/>
    <property type="evidence" value="ECO:0000318"/>
    <property type="project" value="GO_Central"/>
</dbReference>
<dbReference type="FunFam" id="3.40.50.300:FF:004263">
    <property type="entry name" value="ADP-ribosylation factor L"/>
    <property type="match status" value="1"/>
</dbReference>
<dbReference type="Gene3D" id="3.40.50.300">
    <property type="entry name" value="P-loop containing nucleotide triphosphate hydrolases"/>
    <property type="match status" value="1"/>
</dbReference>
<dbReference type="InterPro" id="IPR027417">
    <property type="entry name" value="P-loop_NTPase"/>
</dbReference>
<dbReference type="InterPro" id="IPR005225">
    <property type="entry name" value="Small_GTP-bd"/>
</dbReference>
<dbReference type="InterPro" id="IPR024156">
    <property type="entry name" value="Small_GTPase_ARF"/>
</dbReference>
<dbReference type="InterPro" id="IPR006689">
    <property type="entry name" value="Small_GTPase_ARF/SAR"/>
</dbReference>
<dbReference type="NCBIfam" id="TIGR00231">
    <property type="entry name" value="small_GTP"/>
    <property type="match status" value="1"/>
</dbReference>
<dbReference type="PANTHER" id="PTHR11711">
    <property type="entry name" value="ADP RIBOSYLATION FACTOR-RELATED"/>
    <property type="match status" value="1"/>
</dbReference>
<dbReference type="Pfam" id="PF00025">
    <property type="entry name" value="Arf"/>
    <property type="match status" value="1"/>
</dbReference>
<dbReference type="PRINTS" id="PR00449">
    <property type="entry name" value="RASTRNSFRMNG"/>
</dbReference>
<dbReference type="SMART" id="SM00177">
    <property type="entry name" value="ARF"/>
    <property type="match status" value="1"/>
</dbReference>
<dbReference type="SMART" id="SM00178">
    <property type="entry name" value="SAR"/>
    <property type="match status" value="1"/>
</dbReference>
<dbReference type="SUPFAM" id="SSF52540">
    <property type="entry name" value="P-loop containing nucleoside triphosphate hydrolases"/>
    <property type="match status" value="1"/>
</dbReference>
<dbReference type="PROSITE" id="PS51417">
    <property type="entry name" value="ARF"/>
    <property type="match status" value="1"/>
</dbReference>
<organism>
    <name type="scientific">Dictyostelium discoideum</name>
    <name type="common">Social amoeba</name>
    <dbReference type="NCBI Taxonomy" id="44689"/>
    <lineage>
        <taxon>Eukaryota</taxon>
        <taxon>Amoebozoa</taxon>
        <taxon>Evosea</taxon>
        <taxon>Eumycetozoa</taxon>
        <taxon>Dictyostelia</taxon>
        <taxon>Dictyosteliales</taxon>
        <taxon>Dictyosteliaceae</taxon>
        <taxon>Dictyostelium</taxon>
    </lineage>
</organism>
<reference key="1">
    <citation type="journal article" date="2005" name="Nature">
        <title>The genome of the social amoeba Dictyostelium discoideum.</title>
        <authorList>
            <person name="Eichinger L."/>
            <person name="Pachebat J.A."/>
            <person name="Gloeckner G."/>
            <person name="Rajandream M.A."/>
            <person name="Sucgang R."/>
            <person name="Berriman M."/>
            <person name="Song J."/>
            <person name="Olsen R."/>
            <person name="Szafranski K."/>
            <person name="Xu Q."/>
            <person name="Tunggal B."/>
            <person name="Kummerfeld S."/>
            <person name="Madera M."/>
            <person name="Konfortov B.A."/>
            <person name="Rivero F."/>
            <person name="Bankier A.T."/>
            <person name="Lehmann R."/>
            <person name="Hamlin N."/>
            <person name="Davies R."/>
            <person name="Gaudet P."/>
            <person name="Fey P."/>
            <person name="Pilcher K."/>
            <person name="Chen G."/>
            <person name="Saunders D."/>
            <person name="Sodergren E.J."/>
            <person name="Davis P."/>
            <person name="Kerhornou A."/>
            <person name="Nie X."/>
            <person name="Hall N."/>
            <person name="Anjard C."/>
            <person name="Hemphill L."/>
            <person name="Bason N."/>
            <person name="Farbrother P."/>
            <person name="Desany B."/>
            <person name="Just E."/>
            <person name="Morio T."/>
            <person name="Rost R."/>
            <person name="Churcher C.M."/>
            <person name="Cooper J."/>
            <person name="Haydock S."/>
            <person name="van Driessche N."/>
            <person name="Cronin A."/>
            <person name="Goodhead I."/>
            <person name="Muzny D.M."/>
            <person name="Mourier T."/>
            <person name="Pain A."/>
            <person name="Lu M."/>
            <person name="Harper D."/>
            <person name="Lindsay R."/>
            <person name="Hauser H."/>
            <person name="James K.D."/>
            <person name="Quiles M."/>
            <person name="Madan Babu M."/>
            <person name="Saito T."/>
            <person name="Buchrieser C."/>
            <person name="Wardroper A."/>
            <person name="Felder M."/>
            <person name="Thangavelu M."/>
            <person name="Johnson D."/>
            <person name="Knights A."/>
            <person name="Loulseged H."/>
            <person name="Mungall K.L."/>
            <person name="Oliver K."/>
            <person name="Price C."/>
            <person name="Quail M.A."/>
            <person name="Urushihara H."/>
            <person name="Hernandez J."/>
            <person name="Rabbinowitsch E."/>
            <person name="Steffen D."/>
            <person name="Sanders M."/>
            <person name="Ma J."/>
            <person name="Kohara Y."/>
            <person name="Sharp S."/>
            <person name="Simmonds M.N."/>
            <person name="Spiegler S."/>
            <person name="Tivey A."/>
            <person name="Sugano S."/>
            <person name="White B."/>
            <person name="Walker D."/>
            <person name="Woodward J.R."/>
            <person name="Winckler T."/>
            <person name="Tanaka Y."/>
            <person name="Shaulsky G."/>
            <person name="Schleicher M."/>
            <person name="Weinstock G.M."/>
            <person name="Rosenthal A."/>
            <person name="Cox E.C."/>
            <person name="Chisholm R.L."/>
            <person name="Gibbs R.A."/>
            <person name="Loomis W.F."/>
            <person name="Platzer M."/>
            <person name="Kay R.R."/>
            <person name="Williams J.G."/>
            <person name="Dear P.H."/>
            <person name="Noegel A.A."/>
            <person name="Barrell B.G."/>
            <person name="Kuspa A."/>
        </authorList>
    </citation>
    <scope>NUCLEOTIDE SEQUENCE [LARGE SCALE GENOMIC DNA]</scope>
    <source>
        <strain>AX4</strain>
    </source>
</reference>
<sequence>MDFIISFIKNLFGFLTIKKVMILGVENVGKTTLLYNIYKFYSENITTTTLSSLPIPIPTNGFNVESIVIEQVKFDIWDIGGKETNRICYRHYLTSEIDSIIFVFDSSDINSLEESKKEYQYLKNQISLKNVPFLLVANKQDLKQQTIEIDEILKTYFDKSSINETILMSQNNNDDLIKCINWIFSN</sequence>
<keyword id="KW-0342">GTP-binding</keyword>
<keyword id="KW-0547">Nucleotide-binding</keyword>
<keyword id="KW-1185">Reference proteome</keyword>